<name>INO80_ASPCL</name>
<protein>
    <recommendedName>
        <fullName evidence="1">Chromatin-remodeling ATPase INO80</fullName>
        <ecNumber evidence="1">3.6.4.-</ecNumber>
    </recommendedName>
</protein>
<feature type="chain" id="PRO_0000350954" description="Chromatin-remodeling ATPase INO80">
    <location>
        <begin position="1"/>
        <end position="1707"/>
    </location>
</feature>
<feature type="domain" description="DBINO" evidence="6">
    <location>
        <begin position="593"/>
        <end position="718"/>
    </location>
</feature>
<feature type="domain" description="Helicase ATP-binding" evidence="4">
    <location>
        <begin position="847"/>
        <end position="1019"/>
    </location>
</feature>
<feature type="domain" description="Helicase C-terminal" evidence="5">
    <location>
        <begin position="1423"/>
        <end position="1583"/>
    </location>
</feature>
<feature type="region of interest" description="Disordered" evidence="7">
    <location>
        <begin position="1"/>
        <end position="156"/>
    </location>
</feature>
<feature type="region of interest" description="Disordered" evidence="7">
    <location>
        <begin position="178"/>
        <end position="314"/>
    </location>
</feature>
<feature type="region of interest" description="Disordered" evidence="7">
    <location>
        <begin position="410"/>
        <end position="580"/>
    </location>
</feature>
<feature type="region of interest" description="Disordered" evidence="7">
    <location>
        <begin position="627"/>
        <end position="649"/>
    </location>
</feature>
<feature type="region of interest" description="Disordered" evidence="7">
    <location>
        <begin position="722"/>
        <end position="748"/>
    </location>
</feature>
<feature type="region of interest" description="Disordered" evidence="7">
    <location>
        <begin position="1643"/>
        <end position="1707"/>
    </location>
</feature>
<feature type="coiled-coil region" evidence="3">
    <location>
        <begin position="395"/>
        <end position="478"/>
    </location>
</feature>
<feature type="coiled-coil region" evidence="3">
    <location>
        <begin position="635"/>
        <end position="706"/>
    </location>
</feature>
<feature type="short sequence motif" description="DEAQ box">
    <location>
        <begin position="970"/>
        <end position="973"/>
    </location>
</feature>
<feature type="compositionally biased region" description="Polar residues" evidence="7">
    <location>
        <begin position="7"/>
        <end position="16"/>
    </location>
</feature>
<feature type="compositionally biased region" description="Pro residues" evidence="7">
    <location>
        <begin position="42"/>
        <end position="55"/>
    </location>
</feature>
<feature type="compositionally biased region" description="Polar residues" evidence="7">
    <location>
        <begin position="86"/>
        <end position="99"/>
    </location>
</feature>
<feature type="compositionally biased region" description="Polar residues" evidence="7">
    <location>
        <begin position="110"/>
        <end position="124"/>
    </location>
</feature>
<feature type="compositionally biased region" description="Pro residues" evidence="7">
    <location>
        <begin position="209"/>
        <end position="226"/>
    </location>
</feature>
<feature type="compositionally biased region" description="Pro residues" evidence="7">
    <location>
        <begin position="235"/>
        <end position="249"/>
    </location>
</feature>
<feature type="compositionally biased region" description="Basic and acidic residues" evidence="7">
    <location>
        <begin position="264"/>
        <end position="284"/>
    </location>
</feature>
<feature type="compositionally biased region" description="Basic and acidic residues" evidence="7">
    <location>
        <begin position="426"/>
        <end position="463"/>
    </location>
</feature>
<feature type="compositionally biased region" description="Basic and acidic residues" evidence="7">
    <location>
        <begin position="524"/>
        <end position="535"/>
    </location>
</feature>
<feature type="compositionally biased region" description="Basic and acidic residues" evidence="7">
    <location>
        <begin position="552"/>
        <end position="572"/>
    </location>
</feature>
<feature type="compositionally biased region" description="Basic and acidic residues" evidence="7">
    <location>
        <begin position="633"/>
        <end position="647"/>
    </location>
</feature>
<feature type="compositionally biased region" description="Basic and acidic residues" evidence="7">
    <location>
        <begin position="734"/>
        <end position="746"/>
    </location>
</feature>
<feature type="compositionally biased region" description="Polar residues" evidence="7">
    <location>
        <begin position="1659"/>
        <end position="1673"/>
    </location>
</feature>
<feature type="compositionally biased region" description="Basic residues" evidence="7">
    <location>
        <begin position="1676"/>
        <end position="1692"/>
    </location>
</feature>
<feature type="compositionally biased region" description="Basic and acidic residues" evidence="7">
    <location>
        <begin position="1693"/>
        <end position="1707"/>
    </location>
</feature>
<feature type="binding site" evidence="4">
    <location>
        <begin position="860"/>
        <end position="867"/>
    </location>
    <ligand>
        <name>ATP</name>
        <dbReference type="ChEBI" id="CHEBI:30616"/>
    </ligand>
</feature>
<comment type="function">
    <text evidence="6">ATPase component of the INO80 complex which remodels chromatin by shifting nucleosomes and is involved in DNA repair.</text>
</comment>
<comment type="catalytic activity">
    <reaction evidence="1">
        <text>ATP + H2O = ADP + phosphate + H(+)</text>
        <dbReference type="Rhea" id="RHEA:13065"/>
        <dbReference type="ChEBI" id="CHEBI:15377"/>
        <dbReference type="ChEBI" id="CHEBI:15378"/>
        <dbReference type="ChEBI" id="CHEBI:30616"/>
        <dbReference type="ChEBI" id="CHEBI:43474"/>
        <dbReference type="ChEBI" id="CHEBI:456216"/>
    </reaction>
</comment>
<comment type="subunit">
    <text evidence="6">Component of the INO80 chromatin-remodeling complex.</text>
</comment>
<comment type="subcellular location">
    <subcellularLocation>
        <location evidence="6">Nucleus</location>
    </subcellularLocation>
</comment>
<comment type="domain">
    <text evidence="2">The DBINO region is involved in binding to DNA.</text>
</comment>
<comment type="similarity">
    <text evidence="8">Belongs to the SNF2/RAD54 helicase family.</text>
</comment>
<dbReference type="EC" id="3.6.4.-" evidence="1"/>
<dbReference type="EMBL" id="DS027049">
    <property type="protein sequence ID" value="EAW12534.1"/>
    <property type="molecule type" value="Genomic_DNA"/>
</dbReference>
<dbReference type="RefSeq" id="XP_001273960.1">
    <property type="nucleotide sequence ID" value="XM_001273959.1"/>
</dbReference>
<dbReference type="SMR" id="A1C9W6"/>
<dbReference type="STRING" id="344612.A1C9W6"/>
<dbReference type="EnsemblFungi" id="EAW12534">
    <property type="protein sequence ID" value="EAW12534"/>
    <property type="gene ID" value="ACLA_009570"/>
</dbReference>
<dbReference type="GeneID" id="4706087"/>
<dbReference type="KEGG" id="act:ACLA_009570"/>
<dbReference type="VEuPathDB" id="FungiDB:ACLA_009570"/>
<dbReference type="eggNOG" id="KOG0388">
    <property type="taxonomic scope" value="Eukaryota"/>
</dbReference>
<dbReference type="HOGENOM" id="CLU_000315_26_0_1"/>
<dbReference type="OMA" id="NLLGFHC"/>
<dbReference type="OrthoDB" id="372624at2759"/>
<dbReference type="Proteomes" id="UP000006701">
    <property type="component" value="Unassembled WGS sequence"/>
</dbReference>
<dbReference type="GO" id="GO:0000775">
    <property type="term" value="C:chromosome, centromeric region"/>
    <property type="evidence" value="ECO:0007669"/>
    <property type="project" value="EnsemblFungi"/>
</dbReference>
<dbReference type="GO" id="GO:0000781">
    <property type="term" value="C:chromosome, telomeric region"/>
    <property type="evidence" value="ECO:0007669"/>
    <property type="project" value="GOC"/>
</dbReference>
<dbReference type="GO" id="GO:0031011">
    <property type="term" value="C:Ino80 complex"/>
    <property type="evidence" value="ECO:0007669"/>
    <property type="project" value="EnsemblFungi"/>
</dbReference>
<dbReference type="GO" id="GO:0005524">
    <property type="term" value="F:ATP binding"/>
    <property type="evidence" value="ECO:0007669"/>
    <property type="project" value="UniProtKB-KW"/>
</dbReference>
<dbReference type="GO" id="GO:0016887">
    <property type="term" value="F:ATP hydrolysis activity"/>
    <property type="evidence" value="ECO:0007669"/>
    <property type="project" value="EnsemblFungi"/>
</dbReference>
<dbReference type="GO" id="GO:0140658">
    <property type="term" value="F:ATP-dependent chromatin remodeler activity"/>
    <property type="evidence" value="ECO:0007669"/>
    <property type="project" value="InterPro"/>
</dbReference>
<dbReference type="GO" id="GO:0003677">
    <property type="term" value="F:DNA binding"/>
    <property type="evidence" value="ECO:0007669"/>
    <property type="project" value="UniProtKB-KW"/>
</dbReference>
<dbReference type="GO" id="GO:0042393">
    <property type="term" value="F:histone binding"/>
    <property type="evidence" value="ECO:0007669"/>
    <property type="project" value="TreeGrafter"/>
</dbReference>
<dbReference type="GO" id="GO:0034080">
    <property type="term" value="P:CENP-A containing chromatin assembly"/>
    <property type="evidence" value="ECO:0007669"/>
    <property type="project" value="EnsemblFungi"/>
</dbReference>
<dbReference type="GO" id="GO:0006281">
    <property type="term" value="P:DNA repair"/>
    <property type="evidence" value="ECO:0007669"/>
    <property type="project" value="UniProtKB-KW"/>
</dbReference>
<dbReference type="GO" id="GO:0045944">
    <property type="term" value="P:positive regulation of transcription by RNA polymerase II"/>
    <property type="evidence" value="ECO:0007669"/>
    <property type="project" value="EnsemblFungi"/>
</dbReference>
<dbReference type="GO" id="GO:0032006">
    <property type="term" value="P:regulation of TOR signaling"/>
    <property type="evidence" value="ECO:0007669"/>
    <property type="project" value="EnsemblFungi"/>
</dbReference>
<dbReference type="GO" id="GO:0031509">
    <property type="term" value="P:subtelomeric heterochromatin formation"/>
    <property type="evidence" value="ECO:0007669"/>
    <property type="project" value="EnsemblFungi"/>
</dbReference>
<dbReference type="GO" id="GO:0000722">
    <property type="term" value="P:telomere maintenance via recombination"/>
    <property type="evidence" value="ECO:0007669"/>
    <property type="project" value="EnsemblFungi"/>
</dbReference>
<dbReference type="GO" id="GO:0006366">
    <property type="term" value="P:transcription by RNA polymerase II"/>
    <property type="evidence" value="ECO:0007669"/>
    <property type="project" value="EnsemblFungi"/>
</dbReference>
<dbReference type="CDD" id="cd18002">
    <property type="entry name" value="DEXQc_INO80"/>
    <property type="match status" value="1"/>
</dbReference>
<dbReference type="CDD" id="cd18793">
    <property type="entry name" value="SF2_C_SNF"/>
    <property type="match status" value="1"/>
</dbReference>
<dbReference type="FunFam" id="3.40.50.10810:FF:000006">
    <property type="entry name" value="Putative DNA helicase INO80"/>
    <property type="match status" value="1"/>
</dbReference>
<dbReference type="FunFam" id="3.40.50.300:FF:001269">
    <property type="entry name" value="SNF2 family helicase/ATPase"/>
    <property type="match status" value="1"/>
</dbReference>
<dbReference type="Gene3D" id="3.40.50.300">
    <property type="entry name" value="P-loop containing nucleotide triphosphate hydrolases"/>
    <property type="match status" value="1"/>
</dbReference>
<dbReference type="Gene3D" id="3.40.50.10810">
    <property type="entry name" value="Tandem AAA-ATPase domain"/>
    <property type="match status" value="1"/>
</dbReference>
<dbReference type="InterPro" id="IPR020838">
    <property type="entry name" value="DBINO"/>
</dbReference>
<dbReference type="InterPro" id="IPR031047">
    <property type="entry name" value="DEXQc_INO80"/>
</dbReference>
<dbReference type="InterPro" id="IPR014001">
    <property type="entry name" value="Helicase_ATP-bd"/>
</dbReference>
<dbReference type="InterPro" id="IPR001650">
    <property type="entry name" value="Helicase_C-like"/>
</dbReference>
<dbReference type="InterPro" id="IPR050520">
    <property type="entry name" value="INO80/SWR1_helicase"/>
</dbReference>
<dbReference type="InterPro" id="IPR027417">
    <property type="entry name" value="P-loop_NTPase"/>
</dbReference>
<dbReference type="InterPro" id="IPR038718">
    <property type="entry name" value="SNF2-like_sf"/>
</dbReference>
<dbReference type="InterPro" id="IPR049730">
    <property type="entry name" value="SNF2/RAD54-like_C"/>
</dbReference>
<dbReference type="InterPro" id="IPR000330">
    <property type="entry name" value="SNF2_N"/>
</dbReference>
<dbReference type="PANTHER" id="PTHR45685:SF2">
    <property type="entry name" value="CHROMATIN-REMODELING ATPASE INO80"/>
    <property type="match status" value="1"/>
</dbReference>
<dbReference type="PANTHER" id="PTHR45685">
    <property type="entry name" value="HELICASE SRCAP-RELATED"/>
    <property type="match status" value="1"/>
</dbReference>
<dbReference type="Pfam" id="PF13892">
    <property type="entry name" value="DBINO"/>
    <property type="match status" value="1"/>
</dbReference>
<dbReference type="Pfam" id="PF00271">
    <property type="entry name" value="Helicase_C"/>
    <property type="match status" value="1"/>
</dbReference>
<dbReference type="Pfam" id="PF00176">
    <property type="entry name" value="SNF2-rel_dom"/>
    <property type="match status" value="1"/>
</dbReference>
<dbReference type="SMART" id="SM00487">
    <property type="entry name" value="DEXDc"/>
    <property type="match status" value="1"/>
</dbReference>
<dbReference type="SMART" id="SM00490">
    <property type="entry name" value="HELICc"/>
    <property type="match status" value="1"/>
</dbReference>
<dbReference type="SUPFAM" id="SSF52540">
    <property type="entry name" value="P-loop containing nucleoside triphosphate hydrolases"/>
    <property type="match status" value="2"/>
</dbReference>
<dbReference type="PROSITE" id="PS51413">
    <property type="entry name" value="DBINO"/>
    <property type="match status" value="1"/>
</dbReference>
<dbReference type="PROSITE" id="PS51192">
    <property type="entry name" value="HELICASE_ATP_BIND_1"/>
    <property type="match status" value="1"/>
</dbReference>
<dbReference type="PROSITE" id="PS51194">
    <property type="entry name" value="HELICASE_CTER"/>
    <property type="match status" value="1"/>
</dbReference>
<proteinExistence type="inferred from homology"/>
<sequence>MTGGPPYNSQSPTQQPRYPVYSPPSKTRPYYPNNDQYQQHPPQTPPAFPPQPPLARSPHYSHAPSPLPATLPPLNGGAPPSHHQESSSQYQAHQSSGTPQFPLPRPYSASVLSSNGASPYNHPTPSHAHPSSGRLDSLSQSPPKKDQESLYPIGGNVASGFSSSIMLSPPCILSDSIQKPARAADPMSFASILSGPTEERPLPRKQSPLPEPAPVQTPAPAPPVLAPVPAARKATPPPPTAPVPVPAPLPEIKEPEPLPTPLPRLEKKPSAEKRRRNVDQESRASESLPVPPTNGVSEPAKVSRASNVRKTMSERDTEAINKIIAEIDNAEKSDVESPGFEAEYERYIAKGKKRALDAEKAESIRRKRRRHDFLVKLGKTFEKQANAGMDRFRVANEASVIAEVQAKEIQDEKERKKDMQRKRRRENTVRLEMQKKIEAERKANKANDAAEKAKFLREAERAQRKIKSTKRALEGVTSPEEIGEVTPLAPNLEGGTTSSFHIGRSSPSRRKSGRSGGSSRPKKSKEQKQAEKDAAEAAYAAMENDEPLPLAPKEDPRKESLKKEAKGARSKEPTPQPLSAFESKGYNQIYEQIWRDIARKDIPKVYRIKALSLSTRQENLRKTAQLASKQSRKWQERTNKSMKDTQARAKRTMREMMSFWKRNEREERDLRRLAEKQEIESAKKAEAEREANRQRRKLNFLISQTELYSHFIGRKIKGAEADASGDAAVDGSDETVRPGKAGDHTIDLPSSVADLSTKVTNFEDLDFDAEDETALRQAAMANAQNAVKEAQDRARAFNAEENPMAALDEGELNFQNPTSLGDIEISQPNMLTAKLKEYQLKGLNWLVNLYEQGINGILADEMGLGKTIQSISVMAYLAEVHNIWGPFLVIAPASTLHNWQQEITKFVPDIKVLPYWGSAKDRKVLRKFWDRKHITYTKESEFHVLVTSYQLVVLDSQYFQKVKWQYMILDEAQAIKSSQSSRWKNLLGFSCRNRLLLTGTPIQNNMQELWALLHFIMPTLFDSHDEFSEWFSKDIESHAQSNTKLNEDQLRRLHMILKPFMLRRVKKHVQQELGDKVEKDVFCDLTYRQRAYYTNLRNRVSIMDLIEKAAVGDEADSTTLMNLVMQFRKVCNHPDLFERAETKSPFSLAHFAETASFVREGQNVDVRYSTRNLIEYDLPRLLFSSSGRLDVAGPDNEKVGFQNKYLQHLMNIFTPENIKRSVEDDGAFSFLRFADTSINEAYEQSHLGVFERAVRRRGQSDRLSQLGVIYDNEGDQTANSVLPHSLFNIVERNDRQAVYDVAPEGYMRDLMTVSESSFERQGLNVIEPCASPAASAPPIFISCSGQTALRETNDTFFSVPVRHALYSTPSRQLEEQILEKKLDPAPFSLPPMLPKPLSAKGRYTHIEVPSMRRFVTDSGKLAKLDELLRELKAGGHRVLLYFQMTRMIDLMEEYLTYRNYKYCRLDGSTKLEDRRDTVADFQQRPDIFVFLLSTRAGGLGINLTAADTVIFYDSDWNPTIDSQAMDRAHRLGQTRQVTVYRLITRGTIEERIRKRALQKEEVQRVVISGGAAGGVDFNTRNRESRTKDIAMWLADDEQAELIEQKEKEALDRGEVFGAGKGGKKAALKRKKDLTLDDMYHEGEGNFDDISAKPSGAATPVSTADNIATPSSTPVPKRGRGRGTVKGSSKRAKTTTERLRLIDGDGGL</sequence>
<keyword id="KW-0010">Activator</keyword>
<keyword id="KW-0067">ATP-binding</keyword>
<keyword id="KW-0175">Coiled coil</keyword>
<keyword id="KW-0227">DNA damage</keyword>
<keyword id="KW-0234">DNA repair</keyword>
<keyword id="KW-0238">DNA-binding</keyword>
<keyword id="KW-0378">Hydrolase</keyword>
<keyword id="KW-0547">Nucleotide-binding</keyword>
<keyword id="KW-0539">Nucleus</keyword>
<keyword id="KW-1185">Reference proteome</keyword>
<keyword id="KW-0804">Transcription</keyword>
<keyword id="KW-0805">Transcription regulation</keyword>
<organism>
    <name type="scientific">Aspergillus clavatus (strain ATCC 1007 / CBS 513.65 / DSM 816 / NCTC 3887 / NRRL 1 / QM 1276 / 107)</name>
    <dbReference type="NCBI Taxonomy" id="344612"/>
    <lineage>
        <taxon>Eukaryota</taxon>
        <taxon>Fungi</taxon>
        <taxon>Dikarya</taxon>
        <taxon>Ascomycota</taxon>
        <taxon>Pezizomycotina</taxon>
        <taxon>Eurotiomycetes</taxon>
        <taxon>Eurotiomycetidae</taxon>
        <taxon>Eurotiales</taxon>
        <taxon>Aspergillaceae</taxon>
        <taxon>Aspergillus</taxon>
        <taxon>Aspergillus subgen. Fumigati</taxon>
    </lineage>
</organism>
<accession>A1C9W6</accession>
<gene>
    <name type="primary">ino80</name>
    <name type="ORF">ACLA_009570</name>
</gene>
<reference key="1">
    <citation type="journal article" date="2008" name="PLoS Genet.">
        <title>Genomic islands in the pathogenic filamentous fungus Aspergillus fumigatus.</title>
        <authorList>
            <person name="Fedorova N.D."/>
            <person name="Khaldi N."/>
            <person name="Joardar V.S."/>
            <person name="Maiti R."/>
            <person name="Amedeo P."/>
            <person name="Anderson M.J."/>
            <person name="Crabtree J."/>
            <person name="Silva J.C."/>
            <person name="Badger J.H."/>
            <person name="Albarraq A."/>
            <person name="Angiuoli S."/>
            <person name="Bussey H."/>
            <person name="Bowyer P."/>
            <person name="Cotty P.J."/>
            <person name="Dyer P.S."/>
            <person name="Egan A."/>
            <person name="Galens K."/>
            <person name="Fraser-Liggett C.M."/>
            <person name="Haas B.J."/>
            <person name="Inman J.M."/>
            <person name="Kent R."/>
            <person name="Lemieux S."/>
            <person name="Malavazi I."/>
            <person name="Orvis J."/>
            <person name="Roemer T."/>
            <person name="Ronning C.M."/>
            <person name="Sundaram J.P."/>
            <person name="Sutton G."/>
            <person name="Turner G."/>
            <person name="Venter J.C."/>
            <person name="White O.R."/>
            <person name="Whitty B.R."/>
            <person name="Youngman P."/>
            <person name="Wolfe K.H."/>
            <person name="Goldman G.H."/>
            <person name="Wortman J.R."/>
            <person name="Jiang B."/>
            <person name="Denning D.W."/>
            <person name="Nierman W.C."/>
        </authorList>
    </citation>
    <scope>NUCLEOTIDE SEQUENCE [LARGE SCALE GENOMIC DNA]</scope>
    <source>
        <strain>ATCC 1007 / CBS 513.65 / DSM 816 / NCTC 3887 / NRRL 1 / QM 1276 / 107</strain>
    </source>
</reference>
<evidence type="ECO:0000250" key="1">
    <source>
        <dbReference type="UniProtKB" id="P53115"/>
    </source>
</evidence>
<evidence type="ECO:0000250" key="2">
    <source>
        <dbReference type="UniProtKB" id="Q9ULG1"/>
    </source>
</evidence>
<evidence type="ECO:0000255" key="3"/>
<evidence type="ECO:0000255" key="4">
    <source>
        <dbReference type="PROSITE-ProRule" id="PRU00541"/>
    </source>
</evidence>
<evidence type="ECO:0000255" key="5">
    <source>
        <dbReference type="PROSITE-ProRule" id="PRU00542"/>
    </source>
</evidence>
<evidence type="ECO:0000255" key="6">
    <source>
        <dbReference type="PROSITE-ProRule" id="PRU00746"/>
    </source>
</evidence>
<evidence type="ECO:0000256" key="7">
    <source>
        <dbReference type="SAM" id="MobiDB-lite"/>
    </source>
</evidence>
<evidence type="ECO:0000305" key="8"/>